<feature type="chain" id="PRO_0000333147" description="Na(+)/H(+) antiporter NhaB">
    <location>
        <begin position="1"/>
        <end position="530"/>
    </location>
</feature>
<feature type="transmembrane region" description="Helical" evidence="1">
    <location>
        <begin position="13"/>
        <end position="33"/>
    </location>
</feature>
<feature type="transmembrane region" description="Helical" evidence="1">
    <location>
        <begin position="34"/>
        <end position="54"/>
    </location>
</feature>
<feature type="transmembrane region" description="Helical" evidence="1">
    <location>
        <begin position="90"/>
        <end position="110"/>
    </location>
</feature>
<feature type="transmembrane region" description="Helical" evidence="1">
    <location>
        <begin position="121"/>
        <end position="141"/>
    </location>
</feature>
<feature type="transmembrane region" description="Helical" evidence="1">
    <location>
        <begin position="145"/>
        <end position="165"/>
    </location>
</feature>
<feature type="transmembrane region" description="Helical" evidence="1">
    <location>
        <begin position="205"/>
        <end position="225"/>
    </location>
</feature>
<feature type="transmembrane region" description="Helical" evidence="1">
    <location>
        <begin position="241"/>
        <end position="261"/>
    </location>
</feature>
<feature type="transmembrane region" description="Helical" evidence="1">
    <location>
        <begin position="306"/>
        <end position="326"/>
    </location>
</feature>
<feature type="transmembrane region" description="Helical" evidence="1">
    <location>
        <begin position="351"/>
        <end position="371"/>
    </location>
</feature>
<feature type="transmembrane region" description="Helical" evidence="1">
    <location>
        <begin position="393"/>
        <end position="413"/>
    </location>
</feature>
<feature type="transmembrane region" description="Helical" evidence="1">
    <location>
        <begin position="455"/>
        <end position="475"/>
    </location>
</feature>
<feature type="transmembrane region" description="Helical" evidence="1">
    <location>
        <begin position="481"/>
        <end position="501"/>
    </location>
</feature>
<evidence type="ECO:0000255" key="1">
    <source>
        <dbReference type="HAMAP-Rule" id="MF_01599"/>
    </source>
</evidence>
<sequence length="530" mass="57306">MSISLGNAFIKNFLGKAPDWYKIAILSFLVINPLVFFFVDPFTAGWLLVVEFIFTLAMALKCYPLQPGGLLAIEAIAIGMTSPEQVKHELVANIEVLLLLVFMVAGIYFMKQLLLFIFTKILIGIKSKTALSVAFCFTAAFLSAFLDALTVIAVVISVAVGFYAIYHRVASGQGGSQTHDHTCDSDVDELTREDLEDYRAFLRSLLMHAGVGTALGGVMTMVGEPQNLIIADQAGWMFGEFIIRMLPITAPVFICGILTCIAVEKLGICGYGAKLPENVRKILEDYEAEERKNRTNIDNAKLIIQGLIAVWLIVGLALHLAAVGLIGLSVIILATAFTGVIEEHSMGKAFEEALPFTALLAVFFAVVAVIIDQELFKPIIDAVLAVEDKGAQLALFYVANGLLSMVSDNVFVGTVYINEVKAALMDGVITRDQFDLLAVAINTGTNLPSVATPNGQAAFLFLLTSALAPLIQLSYGRMVWMALPYTIVLALVGMFGIIFFLEPMTAMFYDLGWIAPGTIESATSAISSGH</sequence>
<proteinExistence type="inferred from homology"/>
<keyword id="KW-0050">Antiport</keyword>
<keyword id="KW-0997">Cell inner membrane</keyword>
<keyword id="KW-1003">Cell membrane</keyword>
<keyword id="KW-0406">Ion transport</keyword>
<keyword id="KW-0472">Membrane</keyword>
<keyword id="KW-1185">Reference proteome</keyword>
<keyword id="KW-0915">Sodium</keyword>
<keyword id="KW-0739">Sodium transport</keyword>
<keyword id="KW-0812">Transmembrane</keyword>
<keyword id="KW-1133">Transmembrane helix</keyword>
<keyword id="KW-0813">Transport</keyword>
<comment type="function">
    <text evidence="1">Na(+)/H(+) antiporter that extrudes sodium in exchange for external protons.</text>
</comment>
<comment type="catalytic activity">
    <reaction evidence="1">
        <text>2 Na(+)(in) + 3 H(+)(out) = 2 Na(+)(out) + 3 H(+)(in)</text>
        <dbReference type="Rhea" id="RHEA:29247"/>
        <dbReference type="ChEBI" id="CHEBI:15378"/>
        <dbReference type="ChEBI" id="CHEBI:29101"/>
    </reaction>
    <physiologicalReaction direction="left-to-right" evidence="1">
        <dbReference type="Rhea" id="RHEA:29248"/>
    </physiologicalReaction>
</comment>
<comment type="subcellular location">
    <subcellularLocation>
        <location evidence="1">Cell inner membrane</location>
        <topology evidence="1">Multi-pass membrane protein</topology>
    </subcellularLocation>
</comment>
<comment type="similarity">
    <text evidence="1">Belongs to the NhaB Na(+)/H(+) (TC 2.A.34) antiporter family.</text>
</comment>
<reference key="1">
    <citation type="journal article" date="2005" name="Proc. Natl. Acad. Sci. U.S.A.">
        <title>Complete genome sequence of Vibrio fischeri: a symbiotic bacterium with pathogenic congeners.</title>
        <authorList>
            <person name="Ruby E.G."/>
            <person name="Urbanowski M."/>
            <person name="Campbell J."/>
            <person name="Dunn A."/>
            <person name="Faini M."/>
            <person name="Gunsalus R."/>
            <person name="Lostroh P."/>
            <person name="Lupp C."/>
            <person name="McCann J."/>
            <person name="Millikan D."/>
            <person name="Schaefer A."/>
            <person name="Stabb E."/>
            <person name="Stevens A."/>
            <person name="Visick K."/>
            <person name="Whistler C."/>
            <person name="Greenberg E.P."/>
        </authorList>
    </citation>
    <scope>NUCLEOTIDE SEQUENCE [LARGE SCALE GENOMIC DNA]</scope>
    <source>
        <strain>ATCC 700601 / ES114</strain>
    </source>
</reference>
<accession>Q5E4B7</accession>
<name>NHAB_ALIF1</name>
<dbReference type="EMBL" id="CP000020">
    <property type="protein sequence ID" value="AAW86129.1"/>
    <property type="molecule type" value="Genomic_DNA"/>
</dbReference>
<dbReference type="RefSeq" id="WP_011262196.1">
    <property type="nucleotide sequence ID" value="NC_006840.2"/>
</dbReference>
<dbReference type="RefSeq" id="YP_205017.1">
    <property type="nucleotide sequence ID" value="NC_006840.2"/>
</dbReference>
<dbReference type="SMR" id="Q5E4B7"/>
<dbReference type="STRING" id="312309.VF_1634"/>
<dbReference type="EnsemblBacteria" id="AAW86129">
    <property type="protein sequence ID" value="AAW86129"/>
    <property type="gene ID" value="VF_1634"/>
</dbReference>
<dbReference type="GeneID" id="54164324"/>
<dbReference type="KEGG" id="vfi:VF_1634"/>
<dbReference type="PATRIC" id="fig|312309.11.peg.1655"/>
<dbReference type="eggNOG" id="COG3067">
    <property type="taxonomic scope" value="Bacteria"/>
</dbReference>
<dbReference type="HOGENOM" id="CLU_041110_0_0_6"/>
<dbReference type="OrthoDB" id="5288732at2"/>
<dbReference type="Proteomes" id="UP000000537">
    <property type="component" value="Chromosome I"/>
</dbReference>
<dbReference type="GO" id="GO:0005886">
    <property type="term" value="C:plasma membrane"/>
    <property type="evidence" value="ECO:0007669"/>
    <property type="project" value="UniProtKB-SubCell"/>
</dbReference>
<dbReference type="GO" id="GO:0015385">
    <property type="term" value="F:sodium:proton antiporter activity"/>
    <property type="evidence" value="ECO:0007669"/>
    <property type="project" value="InterPro"/>
</dbReference>
<dbReference type="HAMAP" id="MF_01599">
    <property type="entry name" value="NhaB"/>
    <property type="match status" value="1"/>
</dbReference>
<dbReference type="InterPro" id="IPR004671">
    <property type="entry name" value="Na+/H+_antiporter_NhaB"/>
</dbReference>
<dbReference type="NCBIfam" id="TIGR00774">
    <property type="entry name" value="NhaB"/>
    <property type="match status" value="1"/>
</dbReference>
<dbReference type="NCBIfam" id="NF007093">
    <property type="entry name" value="PRK09547.1"/>
    <property type="match status" value="1"/>
</dbReference>
<dbReference type="PANTHER" id="PTHR43302:SF1">
    <property type="entry name" value="NA(+)_H(+) ANTIPORTER NHAB"/>
    <property type="match status" value="1"/>
</dbReference>
<dbReference type="PANTHER" id="PTHR43302">
    <property type="entry name" value="TRANSPORTER ARSB-RELATED"/>
    <property type="match status" value="1"/>
</dbReference>
<dbReference type="Pfam" id="PF06450">
    <property type="entry name" value="NhaB"/>
    <property type="match status" value="1"/>
</dbReference>
<organism>
    <name type="scientific">Aliivibrio fischeri (strain ATCC 700601 / ES114)</name>
    <name type="common">Vibrio fischeri</name>
    <dbReference type="NCBI Taxonomy" id="312309"/>
    <lineage>
        <taxon>Bacteria</taxon>
        <taxon>Pseudomonadati</taxon>
        <taxon>Pseudomonadota</taxon>
        <taxon>Gammaproteobacteria</taxon>
        <taxon>Vibrionales</taxon>
        <taxon>Vibrionaceae</taxon>
        <taxon>Aliivibrio</taxon>
    </lineage>
</organism>
<protein>
    <recommendedName>
        <fullName evidence="1">Na(+)/H(+) antiporter NhaB</fullName>
    </recommendedName>
    <alternativeName>
        <fullName evidence="1">Sodium/proton antiporter NhaB</fullName>
    </alternativeName>
</protein>
<gene>
    <name evidence="1" type="primary">nhaB</name>
    <name type="ordered locus">VF_1634</name>
</gene>